<keyword id="KW-0687">Ribonucleoprotein</keyword>
<keyword id="KW-0689">Ribosomal protein</keyword>
<keyword id="KW-0694">RNA-binding</keyword>
<keyword id="KW-0699">rRNA-binding</keyword>
<proteinExistence type="inferred from homology"/>
<accession>B1YA33</accession>
<comment type="function">
    <text evidence="1">One of the primary rRNA binding proteins. Required for association of the 30S and 50S subunits to form the 70S ribosome, for tRNA binding and peptide bond formation. It has been suggested to have peptidyltransferase activity; this is somewhat controversial. Makes several contacts with the 16S rRNA in the 70S ribosome.</text>
</comment>
<comment type="subunit">
    <text evidence="1">Part of the 50S ribosomal subunit. Forms a bridge to the 30S subunit in the 70S ribosome.</text>
</comment>
<comment type="similarity">
    <text evidence="1">Belongs to the universal ribosomal protein uL2 family.</text>
</comment>
<dbReference type="EMBL" id="CP001014">
    <property type="protein sequence ID" value="ACB39007.1"/>
    <property type="molecule type" value="Genomic_DNA"/>
</dbReference>
<dbReference type="RefSeq" id="WP_012349428.1">
    <property type="nucleotide sequence ID" value="NC_010525.1"/>
</dbReference>
<dbReference type="SMR" id="B1YA33"/>
<dbReference type="STRING" id="444157.Tneu_0049"/>
<dbReference type="GeneID" id="6164598"/>
<dbReference type="KEGG" id="tne:Tneu_0049"/>
<dbReference type="eggNOG" id="arCOG04067">
    <property type="taxonomic scope" value="Archaea"/>
</dbReference>
<dbReference type="HOGENOM" id="CLU_036235_0_3_2"/>
<dbReference type="OrthoDB" id="5987at2157"/>
<dbReference type="Proteomes" id="UP000001694">
    <property type="component" value="Chromosome"/>
</dbReference>
<dbReference type="GO" id="GO:0022625">
    <property type="term" value="C:cytosolic large ribosomal subunit"/>
    <property type="evidence" value="ECO:0007669"/>
    <property type="project" value="TreeGrafter"/>
</dbReference>
<dbReference type="GO" id="GO:0019843">
    <property type="term" value="F:rRNA binding"/>
    <property type="evidence" value="ECO:0007669"/>
    <property type="project" value="UniProtKB-UniRule"/>
</dbReference>
<dbReference type="GO" id="GO:0003735">
    <property type="term" value="F:structural constituent of ribosome"/>
    <property type="evidence" value="ECO:0007669"/>
    <property type="project" value="InterPro"/>
</dbReference>
<dbReference type="GO" id="GO:0002181">
    <property type="term" value="P:cytoplasmic translation"/>
    <property type="evidence" value="ECO:0007669"/>
    <property type="project" value="TreeGrafter"/>
</dbReference>
<dbReference type="FunFam" id="4.10.950.10:FF:000002">
    <property type="entry name" value="60S ribosomal protein L2"/>
    <property type="match status" value="1"/>
</dbReference>
<dbReference type="Gene3D" id="2.30.30.30">
    <property type="match status" value="1"/>
</dbReference>
<dbReference type="Gene3D" id="2.40.50.140">
    <property type="entry name" value="Nucleic acid-binding proteins"/>
    <property type="match status" value="1"/>
</dbReference>
<dbReference type="Gene3D" id="4.10.950.10">
    <property type="entry name" value="Ribosomal protein L2, domain 3"/>
    <property type="match status" value="1"/>
</dbReference>
<dbReference type="HAMAP" id="MF_01320_A">
    <property type="entry name" value="Ribosomal_uL2_A"/>
    <property type="match status" value="1"/>
</dbReference>
<dbReference type="InterPro" id="IPR012340">
    <property type="entry name" value="NA-bd_OB-fold"/>
</dbReference>
<dbReference type="InterPro" id="IPR014722">
    <property type="entry name" value="Rib_uL2_dom2"/>
</dbReference>
<dbReference type="InterPro" id="IPR002171">
    <property type="entry name" value="Ribosomal_uL2"/>
</dbReference>
<dbReference type="InterPro" id="IPR023672">
    <property type="entry name" value="Ribosomal_uL2_arc_euk"/>
</dbReference>
<dbReference type="InterPro" id="IPR022669">
    <property type="entry name" value="Ribosomal_uL2_C"/>
</dbReference>
<dbReference type="InterPro" id="IPR014726">
    <property type="entry name" value="Ribosomal_uL2_dom3"/>
</dbReference>
<dbReference type="InterPro" id="IPR022666">
    <property type="entry name" value="Ribosomal_uL2_RNA-bd_dom"/>
</dbReference>
<dbReference type="InterPro" id="IPR008991">
    <property type="entry name" value="Translation_prot_SH3-like_sf"/>
</dbReference>
<dbReference type="NCBIfam" id="NF007180">
    <property type="entry name" value="PRK09612.1"/>
    <property type="match status" value="1"/>
</dbReference>
<dbReference type="PANTHER" id="PTHR13691:SF16">
    <property type="entry name" value="LARGE RIBOSOMAL SUBUNIT PROTEIN UL2"/>
    <property type="match status" value="1"/>
</dbReference>
<dbReference type="PANTHER" id="PTHR13691">
    <property type="entry name" value="RIBOSOMAL PROTEIN L2"/>
    <property type="match status" value="1"/>
</dbReference>
<dbReference type="Pfam" id="PF00181">
    <property type="entry name" value="Ribosomal_L2"/>
    <property type="match status" value="1"/>
</dbReference>
<dbReference type="Pfam" id="PF03947">
    <property type="entry name" value="Ribosomal_L2_C"/>
    <property type="match status" value="1"/>
</dbReference>
<dbReference type="PIRSF" id="PIRSF002158">
    <property type="entry name" value="Ribosomal_L2"/>
    <property type="match status" value="1"/>
</dbReference>
<dbReference type="SMART" id="SM01383">
    <property type="entry name" value="Ribosomal_L2"/>
    <property type="match status" value="1"/>
</dbReference>
<dbReference type="SMART" id="SM01382">
    <property type="entry name" value="Ribosomal_L2_C"/>
    <property type="match status" value="1"/>
</dbReference>
<dbReference type="SUPFAM" id="SSF50249">
    <property type="entry name" value="Nucleic acid-binding proteins"/>
    <property type="match status" value="1"/>
</dbReference>
<dbReference type="SUPFAM" id="SSF50104">
    <property type="entry name" value="Translation proteins SH3-like domain"/>
    <property type="match status" value="1"/>
</dbReference>
<organism>
    <name type="scientific">Pyrobaculum neutrophilum (strain DSM 2338 / JCM 9278 / NBRC 100436 / V24Sta)</name>
    <name type="common">Thermoproteus neutrophilus</name>
    <dbReference type="NCBI Taxonomy" id="444157"/>
    <lineage>
        <taxon>Archaea</taxon>
        <taxon>Thermoproteota</taxon>
        <taxon>Thermoprotei</taxon>
        <taxon>Thermoproteales</taxon>
        <taxon>Thermoproteaceae</taxon>
        <taxon>Pyrobaculum</taxon>
    </lineage>
</organism>
<evidence type="ECO:0000255" key="1">
    <source>
        <dbReference type="HAMAP-Rule" id="MF_01320"/>
    </source>
</evidence>
<evidence type="ECO:0000256" key="2">
    <source>
        <dbReference type="SAM" id="MobiDB-lite"/>
    </source>
</evidence>
<evidence type="ECO:0000305" key="3"/>
<protein>
    <recommendedName>
        <fullName evidence="1">Large ribosomal subunit protein uL2</fullName>
    </recommendedName>
    <alternativeName>
        <fullName evidence="3">50S ribosomal protein L2</fullName>
    </alternativeName>
</protein>
<name>RL2_PYRNV</name>
<feature type="chain" id="PRO_1000141629" description="Large ribosomal subunit protein uL2">
    <location>
        <begin position="1"/>
        <end position="245"/>
    </location>
</feature>
<feature type="region of interest" description="Disordered" evidence="2">
    <location>
        <begin position="196"/>
        <end position="226"/>
    </location>
</feature>
<gene>
    <name evidence="1" type="primary">rpl2</name>
    <name type="ordered locus">Tneu_0049</name>
</gene>
<reference key="1">
    <citation type="submission" date="2008-03" db="EMBL/GenBank/DDBJ databases">
        <title>Complete sequence of Thermoproteus neutrophilus V24Sta.</title>
        <authorList>
            <consortium name="US DOE Joint Genome Institute"/>
            <person name="Copeland A."/>
            <person name="Lucas S."/>
            <person name="Lapidus A."/>
            <person name="Glavina del Rio T."/>
            <person name="Dalin E."/>
            <person name="Tice H."/>
            <person name="Bruce D."/>
            <person name="Goodwin L."/>
            <person name="Pitluck S."/>
            <person name="Sims D."/>
            <person name="Brettin T."/>
            <person name="Detter J.C."/>
            <person name="Han C."/>
            <person name="Kuske C.R."/>
            <person name="Schmutz J."/>
            <person name="Larimer F."/>
            <person name="Land M."/>
            <person name="Hauser L."/>
            <person name="Kyrpides N."/>
            <person name="Mikhailova N."/>
            <person name="Biddle J.F."/>
            <person name="Zhang Z."/>
            <person name="Fitz-Gibbon S.T."/>
            <person name="Lowe T.M."/>
            <person name="Saltikov C."/>
            <person name="House C.H."/>
            <person name="Richardson P."/>
        </authorList>
    </citation>
    <scope>NUCLEOTIDE SEQUENCE [LARGE SCALE GENOMIC DNA]</scope>
    <source>
        <strain>DSM 2338 / JCM 9278 / NBRC 100436 / V24Sta</strain>
    </source>
</reference>
<sequence length="245" mass="26169">MGKRILVQRRGRGGSQFRSPSWRREGPVRYPPLGTAGRGYVVDIIHVPGLNAPVAKIRLENGLEFLNYAAEGLYVGQEIEIGEAASPKTGNVVVLGKAPEGTMVFNVEKRPGDGGKFARSGGTYAVVVGQKPEENKTIVRLPSGRTMEVDARGRATVGLVAGGGRIEKPMVKAGKKYYRARAKAWKYPLVRGKAMSPYAHPHGGGSHQKGGTPVSKTAPPGQKVGFIGSRCTGRGCVRARAQQKQ</sequence>